<accession>Q4AAG3</accession>
<gene>
    <name evidence="1" type="primary">rpmJ</name>
    <name type="ordered locus">MHJ_0167</name>
</gene>
<organism>
    <name type="scientific">Mesomycoplasma hyopneumoniae (strain J / ATCC 25934 / NCTC 10110)</name>
    <name type="common">Mycoplasma hyopneumoniae</name>
    <dbReference type="NCBI Taxonomy" id="262719"/>
    <lineage>
        <taxon>Bacteria</taxon>
        <taxon>Bacillati</taxon>
        <taxon>Mycoplasmatota</taxon>
        <taxon>Mycoplasmoidales</taxon>
        <taxon>Metamycoplasmataceae</taxon>
        <taxon>Mesomycoplasma</taxon>
    </lineage>
</organism>
<dbReference type="EMBL" id="AE017243">
    <property type="protein sequence ID" value="AAZ44258.1"/>
    <property type="molecule type" value="Genomic_DNA"/>
</dbReference>
<dbReference type="RefSeq" id="WP_011283963.1">
    <property type="nucleotide sequence ID" value="NC_007295.1"/>
</dbReference>
<dbReference type="SMR" id="Q4AAG3"/>
<dbReference type="GeneID" id="41334470"/>
<dbReference type="KEGG" id="mhj:MHJ_0167"/>
<dbReference type="HOGENOM" id="CLU_135723_6_2_14"/>
<dbReference type="Proteomes" id="UP000000548">
    <property type="component" value="Chromosome"/>
</dbReference>
<dbReference type="GO" id="GO:0005737">
    <property type="term" value="C:cytoplasm"/>
    <property type="evidence" value="ECO:0007669"/>
    <property type="project" value="UniProtKB-ARBA"/>
</dbReference>
<dbReference type="GO" id="GO:1990904">
    <property type="term" value="C:ribonucleoprotein complex"/>
    <property type="evidence" value="ECO:0007669"/>
    <property type="project" value="UniProtKB-KW"/>
</dbReference>
<dbReference type="GO" id="GO:0005840">
    <property type="term" value="C:ribosome"/>
    <property type="evidence" value="ECO:0007669"/>
    <property type="project" value="UniProtKB-KW"/>
</dbReference>
<dbReference type="GO" id="GO:0003735">
    <property type="term" value="F:structural constituent of ribosome"/>
    <property type="evidence" value="ECO:0007669"/>
    <property type="project" value="InterPro"/>
</dbReference>
<dbReference type="GO" id="GO:0006412">
    <property type="term" value="P:translation"/>
    <property type="evidence" value="ECO:0007669"/>
    <property type="project" value="UniProtKB-UniRule"/>
</dbReference>
<dbReference type="HAMAP" id="MF_00251">
    <property type="entry name" value="Ribosomal_bL36"/>
    <property type="match status" value="1"/>
</dbReference>
<dbReference type="InterPro" id="IPR000473">
    <property type="entry name" value="Ribosomal_bL36"/>
</dbReference>
<dbReference type="InterPro" id="IPR035977">
    <property type="entry name" value="Ribosomal_bL36_sp"/>
</dbReference>
<dbReference type="NCBIfam" id="TIGR01022">
    <property type="entry name" value="rpmJ_bact"/>
    <property type="match status" value="1"/>
</dbReference>
<dbReference type="PANTHER" id="PTHR42888">
    <property type="entry name" value="50S RIBOSOMAL PROTEIN L36, CHLOROPLASTIC"/>
    <property type="match status" value="1"/>
</dbReference>
<dbReference type="PANTHER" id="PTHR42888:SF1">
    <property type="entry name" value="LARGE RIBOSOMAL SUBUNIT PROTEIN BL36C"/>
    <property type="match status" value="1"/>
</dbReference>
<dbReference type="Pfam" id="PF00444">
    <property type="entry name" value="Ribosomal_L36"/>
    <property type="match status" value="1"/>
</dbReference>
<dbReference type="SUPFAM" id="SSF57840">
    <property type="entry name" value="Ribosomal protein L36"/>
    <property type="match status" value="1"/>
</dbReference>
<dbReference type="PROSITE" id="PS00828">
    <property type="entry name" value="RIBOSOMAL_L36"/>
    <property type="match status" value="1"/>
</dbReference>
<sequence length="37" mass="4422">MKVRASIKKICKDCKIIKRRSINRVICLIKKHKQRQG</sequence>
<comment type="similarity">
    <text evidence="1">Belongs to the bacterial ribosomal protein bL36 family.</text>
</comment>
<keyword id="KW-0687">Ribonucleoprotein</keyword>
<keyword id="KW-0689">Ribosomal protein</keyword>
<reference key="1">
    <citation type="journal article" date="2005" name="J. Bacteriol.">
        <title>Swine and poultry pathogens: the complete genome sequences of two strains of Mycoplasma hyopneumoniae and a strain of Mycoplasma synoviae.</title>
        <authorList>
            <person name="Vasconcelos A.T.R."/>
            <person name="Ferreira H.B."/>
            <person name="Bizarro C.V."/>
            <person name="Bonatto S.L."/>
            <person name="Carvalho M.O."/>
            <person name="Pinto P.M."/>
            <person name="Almeida D.F."/>
            <person name="Almeida L.G.P."/>
            <person name="Almeida R."/>
            <person name="Alves-Junior L."/>
            <person name="Assuncao E.N."/>
            <person name="Azevedo V.A.C."/>
            <person name="Bogo M.R."/>
            <person name="Brigido M.M."/>
            <person name="Brocchi M."/>
            <person name="Burity H.A."/>
            <person name="Camargo A.A."/>
            <person name="Camargo S.S."/>
            <person name="Carepo M.S."/>
            <person name="Carraro D.M."/>
            <person name="de Mattos Cascardo J.C."/>
            <person name="Castro L.A."/>
            <person name="Cavalcanti G."/>
            <person name="Chemale G."/>
            <person name="Collevatti R.G."/>
            <person name="Cunha C.W."/>
            <person name="Dallagiovanna B."/>
            <person name="Dambros B.P."/>
            <person name="Dellagostin O.A."/>
            <person name="Falcao C."/>
            <person name="Fantinatti-Garboggini F."/>
            <person name="Felipe M.S.S."/>
            <person name="Fiorentin L."/>
            <person name="Franco G.R."/>
            <person name="Freitas N.S.A."/>
            <person name="Frias D."/>
            <person name="Grangeiro T.B."/>
            <person name="Grisard E.C."/>
            <person name="Guimaraes C.T."/>
            <person name="Hungria M."/>
            <person name="Jardim S.N."/>
            <person name="Krieger M.A."/>
            <person name="Laurino J.P."/>
            <person name="Lima L.F.A."/>
            <person name="Lopes M.I."/>
            <person name="Loreto E.L.S."/>
            <person name="Madeira H.M.F."/>
            <person name="Manfio G.P."/>
            <person name="Maranhao A.Q."/>
            <person name="Martinkovics C.T."/>
            <person name="Medeiros S.R.B."/>
            <person name="Moreira M.A.M."/>
            <person name="Neiva M."/>
            <person name="Ramalho-Neto C.E."/>
            <person name="Nicolas M.F."/>
            <person name="Oliveira S.C."/>
            <person name="Paixao R.F.C."/>
            <person name="Pedrosa F.O."/>
            <person name="Pena S.D.J."/>
            <person name="Pereira M."/>
            <person name="Pereira-Ferrari L."/>
            <person name="Piffer I."/>
            <person name="Pinto L.S."/>
            <person name="Potrich D.P."/>
            <person name="Salim A.C.M."/>
            <person name="Santos F.R."/>
            <person name="Schmitt R."/>
            <person name="Schneider M.P.C."/>
            <person name="Schrank A."/>
            <person name="Schrank I.S."/>
            <person name="Schuck A.F."/>
            <person name="Seuanez H.N."/>
            <person name="Silva D.W."/>
            <person name="Silva R."/>
            <person name="Silva S.C."/>
            <person name="Soares C.M.A."/>
            <person name="Souza K.R.L."/>
            <person name="Souza R.C."/>
            <person name="Staats C.C."/>
            <person name="Steffens M.B.R."/>
            <person name="Teixeira S.M.R."/>
            <person name="Urmenyi T.P."/>
            <person name="Vainstein M.H."/>
            <person name="Zuccherato L.W."/>
            <person name="Simpson A.J.G."/>
            <person name="Zaha A."/>
        </authorList>
    </citation>
    <scope>NUCLEOTIDE SEQUENCE [LARGE SCALE GENOMIC DNA]</scope>
    <source>
        <strain>J / ATCC 25934 / NCTC 10110</strain>
    </source>
</reference>
<proteinExistence type="inferred from homology"/>
<evidence type="ECO:0000255" key="1">
    <source>
        <dbReference type="HAMAP-Rule" id="MF_00251"/>
    </source>
</evidence>
<evidence type="ECO:0000305" key="2"/>
<name>RL36_MESHJ</name>
<feature type="chain" id="PRO_0000344692" description="Large ribosomal subunit protein bL36">
    <location>
        <begin position="1"/>
        <end position="37"/>
    </location>
</feature>
<protein>
    <recommendedName>
        <fullName evidence="1">Large ribosomal subunit protein bL36</fullName>
    </recommendedName>
    <alternativeName>
        <fullName evidence="2">50S ribosomal protein L36</fullName>
    </alternativeName>
</protein>